<gene>
    <name evidence="9" type="ORF">OsI_21320</name>
</gene>
<feature type="transit peptide" description="Chloroplast" evidence="6">
    <location>
        <begin position="1"/>
        <end position="36"/>
    </location>
</feature>
<feature type="chain" id="PRO_0000442378" description="Ferredoxin--NADP reductase, leaf isozyme 1, chloroplastic">
    <location>
        <begin position="37"/>
        <end position="362"/>
    </location>
</feature>
<feature type="domain" description="FAD-binding FR-type" evidence="7">
    <location>
        <begin position="83"/>
        <end position="205"/>
    </location>
</feature>
<feature type="binding site" evidence="3">
    <location>
        <begin position="141"/>
        <end position="144"/>
    </location>
    <ligand>
        <name>FAD</name>
        <dbReference type="ChEBI" id="CHEBI:57692"/>
    </ligand>
</feature>
<feature type="binding site" evidence="3">
    <location>
        <position position="144"/>
    </location>
    <ligand>
        <name>NADP(+)</name>
        <dbReference type="ChEBI" id="CHEBI:58349"/>
    </ligand>
</feature>
<feature type="binding site" evidence="3">
    <location>
        <begin position="162"/>
        <end position="164"/>
    </location>
    <ligand>
        <name>FAD</name>
        <dbReference type="ChEBI" id="CHEBI:57692"/>
    </ligand>
</feature>
<feature type="binding site" evidence="3">
    <location>
        <position position="164"/>
    </location>
    <ligand>
        <name>NADP(+)</name>
        <dbReference type="ChEBI" id="CHEBI:58349"/>
    </ligand>
</feature>
<feature type="binding site" evidence="3">
    <location>
        <position position="168"/>
    </location>
    <ligand>
        <name>FAD</name>
        <dbReference type="ChEBI" id="CHEBI:57692"/>
    </ligand>
</feature>
<feature type="binding site" evidence="3">
    <location>
        <begin position="179"/>
        <end position="181"/>
    </location>
    <ligand>
        <name>FAD</name>
        <dbReference type="ChEBI" id="CHEBI:57692"/>
    </ligand>
</feature>
<feature type="binding site" evidence="2">
    <location>
        <position position="220"/>
    </location>
    <ligand>
        <name>FAD</name>
        <dbReference type="ChEBI" id="CHEBI:57692"/>
    </ligand>
</feature>
<feature type="binding site" evidence="3">
    <location>
        <position position="220"/>
    </location>
    <ligand>
        <name>NADP(+)</name>
        <dbReference type="ChEBI" id="CHEBI:58349"/>
    </ligand>
</feature>
<feature type="binding site" evidence="3">
    <location>
        <begin position="252"/>
        <end position="253"/>
    </location>
    <ligand>
        <name>NADP(+)</name>
        <dbReference type="ChEBI" id="CHEBI:58349"/>
    </ligand>
</feature>
<feature type="binding site" evidence="3">
    <location>
        <begin position="282"/>
        <end position="283"/>
    </location>
    <ligand>
        <name>NADP(+)</name>
        <dbReference type="ChEBI" id="CHEBI:58349"/>
    </ligand>
</feature>
<feature type="binding site" evidence="3">
    <location>
        <position position="292"/>
    </location>
    <ligand>
        <name>NADP(+)</name>
        <dbReference type="ChEBI" id="CHEBI:58349"/>
    </ligand>
</feature>
<feature type="binding site" evidence="3">
    <location>
        <begin position="321"/>
        <end position="322"/>
    </location>
    <ligand>
        <name>NADP(+)</name>
        <dbReference type="ChEBI" id="CHEBI:58349"/>
    </ligand>
</feature>
<feature type="binding site" evidence="3">
    <location>
        <position position="360"/>
    </location>
    <ligand>
        <name>NADP(+)</name>
        <dbReference type="ChEBI" id="CHEBI:58349"/>
    </ligand>
</feature>
<feature type="modified residue" description="Phosphoserine" evidence="5">
    <location>
        <position position="181"/>
    </location>
</feature>
<feature type="disulfide bond" evidence="1">
    <location>
        <begin position="180"/>
        <end position="185"/>
    </location>
</feature>
<dbReference type="EC" id="1.18.1.2" evidence="5"/>
<dbReference type="EMBL" id="CM000131">
    <property type="protein sequence ID" value="EAY99350.1"/>
    <property type="molecule type" value="Genomic_DNA"/>
</dbReference>
<dbReference type="SMR" id="A2Y8E0"/>
<dbReference type="STRING" id="39946.A2Y8E0"/>
<dbReference type="EnsemblPlants" id="BGIOSGA022091-TA">
    <property type="protein sequence ID" value="BGIOSGA022091-PA"/>
    <property type="gene ID" value="BGIOSGA022091"/>
</dbReference>
<dbReference type="Gramene" id="BGIOSGA022091-TA">
    <property type="protein sequence ID" value="BGIOSGA022091-PA"/>
    <property type="gene ID" value="BGIOSGA022091"/>
</dbReference>
<dbReference type="HOGENOM" id="CLU_053066_0_0_1"/>
<dbReference type="OMA" id="ETWHMLF"/>
<dbReference type="UniPathway" id="UPA00091"/>
<dbReference type="Proteomes" id="UP000007015">
    <property type="component" value="Chromosome 6"/>
</dbReference>
<dbReference type="GO" id="GO:0009570">
    <property type="term" value="C:chloroplast stroma"/>
    <property type="evidence" value="ECO:0007669"/>
    <property type="project" value="UniProtKB-SubCell"/>
</dbReference>
<dbReference type="GO" id="GO:0098807">
    <property type="term" value="C:chloroplast thylakoid membrane protein complex"/>
    <property type="evidence" value="ECO:0000250"/>
    <property type="project" value="UniProtKB"/>
</dbReference>
<dbReference type="GO" id="GO:0004324">
    <property type="term" value="F:ferredoxin-NADP+ reductase activity"/>
    <property type="evidence" value="ECO:0007669"/>
    <property type="project" value="UniProtKB-EC"/>
</dbReference>
<dbReference type="GO" id="GO:0015979">
    <property type="term" value="P:photosynthesis"/>
    <property type="evidence" value="ECO:0007669"/>
    <property type="project" value="UniProtKB-UniPathway"/>
</dbReference>
<dbReference type="CDD" id="cd06208">
    <property type="entry name" value="CYPOR_like_FNR"/>
    <property type="match status" value="1"/>
</dbReference>
<dbReference type="FunFam" id="2.40.30.10:FF:000048">
    <property type="entry name" value="Ferredoxin--NADP reductase, chloroplastic"/>
    <property type="match status" value="1"/>
</dbReference>
<dbReference type="FunFam" id="3.40.50.80:FF:000008">
    <property type="entry name" value="Ferredoxin--NADP reductase, chloroplastic"/>
    <property type="match status" value="1"/>
</dbReference>
<dbReference type="Gene3D" id="3.40.50.80">
    <property type="entry name" value="Nucleotide-binding domain of ferredoxin-NADP reductase (FNR) module"/>
    <property type="match status" value="1"/>
</dbReference>
<dbReference type="Gene3D" id="2.40.30.10">
    <property type="entry name" value="Translation factors"/>
    <property type="match status" value="1"/>
</dbReference>
<dbReference type="InterPro" id="IPR017927">
    <property type="entry name" value="FAD-bd_FR_type"/>
</dbReference>
<dbReference type="InterPro" id="IPR001709">
    <property type="entry name" value="Flavoprot_Pyr_Nucl_cyt_Rdtase"/>
</dbReference>
<dbReference type="InterPro" id="IPR015701">
    <property type="entry name" value="FNR"/>
</dbReference>
<dbReference type="InterPro" id="IPR039261">
    <property type="entry name" value="FNR_nucleotide-bd"/>
</dbReference>
<dbReference type="InterPro" id="IPR035442">
    <property type="entry name" value="FNR_plant_Cyanobacteria"/>
</dbReference>
<dbReference type="InterPro" id="IPR001433">
    <property type="entry name" value="OxRdtase_FAD/NAD-bd"/>
</dbReference>
<dbReference type="InterPro" id="IPR017938">
    <property type="entry name" value="Riboflavin_synthase-like_b-brl"/>
</dbReference>
<dbReference type="PANTHER" id="PTHR43314">
    <property type="match status" value="1"/>
</dbReference>
<dbReference type="Pfam" id="PF00175">
    <property type="entry name" value="NAD_binding_1"/>
    <property type="match status" value="1"/>
</dbReference>
<dbReference type="PIRSF" id="PIRSF501178">
    <property type="entry name" value="FNR-PetH"/>
    <property type="match status" value="1"/>
</dbReference>
<dbReference type="PIRSF" id="PIRSF000361">
    <property type="entry name" value="Frd-NADP+_RD"/>
    <property type="match status" value="1"/>
</dbReference>
<dbReference type="PRINTS" id="PR00371">
    <property type="entry name" value="FPNCR"/>
</dbReference>
<dbReference type="SUPFAM" id="SSF52343">
    <property type="entry name" value="Ferredoxin reductase-like, C-terminal NADP-linked domain"/>
    <property type="match status" value="1"/>
</dbReference>
<dbReference type="SUPFAM" id="SSF63380">
    <property type="entry name" value="Riboflavin synthase domain-like"/>
    <property type="match status" value="1"/>
</dbReference>
<dbReference type="PROSITE" id="PS51384">
    <property type="entry name" value="FAD_FR"/>
    <property type="match status" value="1"/>
</dbReference>
<evidence type="ECO:0000250" key="1"/>
<evidence type="ECO:0000250" key="2">
    <source>
        <dbReference type="UniProtKB" id="P00455"/>
    </source>
</evidence>
<evidence type="ECO:0000250" key="3">
    <source>
        <dbReference type="UniProtKB" id="P10933"/>
    </source>
</evidence>
<evidence type="ECO:0000250" key="4">
    <source>
        <dbReference type="UniProtKB" id="P41344"/>
    </source>
</evidence>
<evidence type="ECO:0000250" key="5">
    <source>
        <dbReference type="UniProtKB" id="Q9FKW6"/>
    </source>
</evidence>
<evidence type="ECO:0000255" key="6"/>
<evidence type="ECO:0000255" key="7">
    <source>
        <dbReference type="PROSITE-ProRule" id="PRU00716"/>
    </source>
</evidence>
<evidence type="ECO:0000305" key="8"/>
<evidence type="ECO:0000312" key="9">
    <source>
        <dbReference type="EMBL" id="EAY99350.1"/>
    </source>
</evidence>
<name>FENR1_ORYSI</name>
<accession>A2Y8E0</accession>
<proteinExistence type="inferred from homology"/>
<keyword id="KW-0150">Chloroplast</keyword>
<keyword id="KW-1015">Disulfide bond</keyword>
<keyword id="KW-0249">Electron transport</keyword>
<keyword id="KW-0274">FAD</keyword>
<keyword id="KW-0285">Flavoprotein</keyword>
<keyword id="KW-0472">Membrane</keyword>
<keyword id="KW-0521">NADP</keyword>
<keyword id="KW-0560">Oxidoreductase</keyword>
<keyword id="KW-0597">Phosphoprotein</keyword>
<keyword id="KW-0602">Photosynthesis</keyword>
<keyword id="KW-0934">Plastid</keyword>
<keyword id="KW-1185">Reference proteome</keyword>
<keyword id="KW-0793">Thylakoid</keyword>
<keyword id="KW-0809">Transit peptide</keyword>
<keyword id="KW-0813">Transport</keyword>
<protein>
    <recommendedName>
        <fullName>Ferredoxin--NADP reductase, leaf isozyme 1, chloroplastic</fullName>
        <shortName>FNR</shortName>
        <ecNumber evidence="5">1.18.1.2</ecNumber>
    </recommendedName>
    <alternativeName>
        <fullName evidence="8">Leaf FNR 1</fullName>
        <shortName evidence="8">FNR-1</shortName>
        <shortName evidence="8">Os-LFNR1</shortName>
    </alternativeName>
</protein>
<reference key="1">
    <citation type="journal article" date="2005" name="PLoS Biol.">
        <title>The genomes of Oryza sativa: a history of duplications.</title>
        <authorList>
            <person name="Yu J."/>
            <person name="Wang J."/>
            <person name="Lin W."/>
            <person name="Li S."/>
            <person name="Li H."/>
            <person name="Zhou J."/>
            <person name="Ni P."/>
            <person name="Dong W."/>
            <person name="Hu S."/>
            <person name="Zeng C."/>
            <person name="Zhang J."/>
            <person name="Zhang Y."/>
            <person name="Li R."/>
            <person name="Xu Z."/>
            <person name="Li S."/>
            <person name="Li X."/>
            <person name="Zheng H."/>
            <person name="Cong L."/>
            <person name="Lin L."/>
            <person name="Yin J."/>
            <person name="Geng J."/>
            <person name="Li G."/>
            <person name="Shi J."/>
            <person name="Liu J."/>
            <person name="Lv H."/>
            <person name="Li J."/>
            <person name="Wang J."/>
            <person name="Deng Y."/>
            <person name="Ran L."/>
            <person name="Shi X."/>
            <person name="Wang X."/>
            <person name="Wu Q."/>
            <person name="Li C."/>
            <person name="Ren X."/>
            <person name="Wang J."/>
            <person name="Wang X."/>
            <person name="Li D."/>
            <person name="Liu D."/>
            <person name="Zhang X."/>
            <person name="Ji Z."/>
            <person name="Zhao W."/>
            <person name="Sun Y."/>
            <person name="Zhang Z."/>
            <person name="Bao J."/>
            <person name="Han Y."/>
            <person name="Dong L."/>
            <person name="Ji J."/>
            <person name="Chen P."/>
            <person name="Wu S."/>
            <person name="Liu J."/>
            <person name="Xiao Y."/>
            <person name="Bu D."/>
            <person name="Tan J."/>
            <person name="Yang L."/>
            <person name="Ye C."/>
            <person name="Zhang J."/>
            <person name="Xu J."/>
            <person name="Zhou Y."/>
            <person name="Yu Y."/>
            <person name="Zhang B."/>
            <person name="Zhuang S."/>
            <person name="Wei H."/>
            <person name="Liu B."/>
            <person name="Lei M."/>
            <person name="Yu H."/>
            <person name="Li Y."/>
            <person name="Xu H."/>
            <person name="Wei S."/>
            <person name="He X."/>
            <person name="Fang L."/>
            <person name="Zhang Z."/>
            <person name="Zhang Y."/>
            <person name="Huang X."/>
            <person name="Su Z."/>
            <person name="Tong W."/>
            <person name="Li J."/>
            <person name="Tong Z."/>
            <person name="Li S."/>
            <person name="Ye J."/>
            <person name="Wang L."/>
            <person name="Fang L."/>
            <person name="Lei T."/>
            <person name="Chen C.-S."/>
            <person name="Chen H.-C."/>
            <person name="Xu Z."/>
            <person name="Li H."/>
            <person name="Huang H."/>
            <person name="Zhang F."/>
            <person name="Xu H."/>
            <person name="Li N."/>
            <person name="Zhao C."/>
            <person name="Li S."/>
            <person name="Dong L."/>
            <person name="Huang Y."/>
            <person name="Li L."/>
            <person name="Xi Y."/>
            <person name="Qi Q."/>
            <person name="Li W."/>
            <person name="Zhang B."/>
            <person name="Hu W."/>
            <person name="Zhang Y."/>
            <person name="Tian X."/>
            <person name="Jiao Y."/>
            <person name="Liang X."/>
            <person name="Jin J."/>
            <person name="Gao L."/>
            <person name="Zheng W."/>
            <person name="Hao B."/>
            <person name="Liu S.-M."/>
            <person name="Wang W."/>
            <person name="Yuan L."/>
            <person name="Cao M."/>
            <person name="McDermott J."/>
            <person name="Samudrala R."/>
            <person name="Wang J."/>
            <person name="Wong G.K.-S."/>
            <person name="Yang H."/>
        </authorList>
    </citation>
    <scope>NUCLEOTIDE SEQUENCE [LARGE SCALE GENOMIC DNA]</scope>
    <source>
        <strain>cv. 93-11</strain>
    </source>
</reference>
<sequence length="362" mass="39985">MAAVTAAAVSTSAAAAVTKASPSPAHCFLPCPPRTRAAHQRGLLLRAQVSTTDAAAVAAAPAKKEKISKKHDEGVVTNKYRPKEPYVGKCLLNTKITADDAPGETWHMVFSTEGEIPYREGQSIGVIADGVDKNGKPHKLRLYSIASSALGDFGDSKTVSLCVKRLVYTNDQGEIVKGVCSNFLCDLKPGSDVKITGPVGKEMLMPKDPNANIIMLATGTGIAPFRSFLWKMFFEKYDDYKFNGLAWLFLGVPTSSSLLYKEEFDKMKAKAPENFRVDYAVSREQTNAQGEKMYIQTRMAEYKEELWELLKKDNTYVYMCGLKGMEKGIDDIMVSLAAKDGIDWADYKKQLKKGEQWNVEVY</sequence>
<comment type="function">
    <text evidence="5">Plays a key role in regulating the relative amounts of cyclic and non-cyclic electron flow to meet the demands of the plant for ATP and reducing power.</text>
</comment>
<comment type="catalytic activity">
    <reaction evidence="5">
        <text>2 reduced [2Fe-2S]-[ferredoxin] + NADP(+) + H(+) = 2 oxidized [2Fe-2S]-[ferredoxin] + NADPH</text>
        <dbReference type="Rhea" id="RHEA:20125"/>
        <dbReference type="Rhea" id="RHEA-COMP:10000"/>
        <dbReference type="Rhea" id="RHEA-COMP:10001"/>
        <dbReference type="ChEBI" id="CHEBI:15378"/>
        <dbReference type="ChEBI" id="CHEBI:33737"/>
        <dbReference type="ChEBI" id="CHEBI:33738"/>
        <dbReference type="ChEBI" id="CHEBI:57783"/>
        <dbReference type="ChEBI" id="CHEBI:58349"/>
        <dbReference type="EC" id="1.18.1.2"/>
    </reaction>
</comment>
<comment type="cofactor">
    <cofactor evidence="5">
        <name>FAD</name>
        <dbReference type="ChEBI" id="CHEBI:57692"/>
    </cofactor>
</comment>
<comment type="pathway">
    <text evidence="5">Energy metabolism; photosynthesis.</text>
</comment>
<comment type="subunit">
    <text evidence="4 5">Heterodimer with LFNR2 (By similarity). Component of high molecular weight thylakoid LFNRs-containing protein complexes containing LIR1, LFNR1, LFNR2, TIC62 and TROL proteins. Interacts directly with LFNR1 and LFNR2; LIR1 increases the affinity of LFNR1 and LFNR2 for TIC62 and subsequent thylakoid relocalization (By similarity).</text>
</comment>
<comment type="subcellular location">
    <subcellularLocation>
        <location evidence="5">Plastid</location>
        <location evidence="5">Chloroplast stroma</location>
    </subcellularLocation>
    <subcellularLocation>
        <location evidence="5">Plastid</location>
        <location evidence="5">Chloroplast thylakoid membrane</location>
        <topology evidence="5">Peripheral membrane protein</topology>
        <orientation evidence="5">Stromal side</orientation>
    </subcellularLocation>
</comment>
<comment type="PTM">
    <text evidence="4">May form interchain disulfide bonds with LIR1.</text>
</comment>
<comment type="similarity">
    <text evidence="8">Belongs to the ferredoxin--NADP reductase type 1 family.</text>
</comment>
<organism>
    <name type="scientific">Oryza sativa subsp. indica</name>
    <name type="common">Rice</name>
    <dbReference type="NCBI Taxonomy" id="39946"/>
    <lineage>
        <taxon>Eukaryota</taxon>
        <taxon>Viridiplantae</taxon>
        <taxon>Streptophyta</taxon>
        <taxon>Embryophyta</taxon>
        <taxon>Tracheophyta</taxon>
        <taxon>Spermatophyta</taxon>
        <taxon>Magnoliopsida</taxon>
        <taxon>Liliopsida</taxon>
        <taxon>Poales</taxon>
        <taxon>Poaceae</taxon>
        <taxon>BOP clade</taxon>
        <taxon>Oryzoideae</taxon>
        <taxon>Oryzeae</taxon>
        <taxon>Oryzinae</taxon>
        <taxon>Oryza</taxon>
        <taxon>Oryza sativa</taxon>
    </lineage>
</organism>